<accession>Q5R757</accession>
<name>PLCD_PONAB</name>
<sequence>MDLAGLLKSQFLCHLVFCYVFIASGLIINTIQLFTLLLWPINKQLFRKINCRLSYCISSQLVMLLEWWSGTECTIFTDPRAYLKYGKENAIVVLNHKFEIDFLCGWSLSERFGLLGGSKVLAKKELAYVPIIGWMWYFTEMVFCSRKWEQDRKTVATSLQHLRDYPEKYFFLIHCEGTRFTEKKHEISMQVARAKGLPRLKHHLLPRTKGFAITVRSLRNVVSAVYDCTLNFRNNENPTLLGVLNGKKYHADLYVRRIPLEDIPEDDDECSAWLHKLYQEKDAFQEEYYRTGTFPETPMVPPRRPWTLVNWLFWASLVLYPFFQFLVSMIRSGSSLTLASFILVFFVASVGVRWMIGVTEIDKGSAYGNSGSKQKLND</sequence>
<organism>
    <name type="scientific">Pongo abelii</name>
    <name type="common">Sumatran orangutan</name>
    <name type="synonym">Pongo pygmaeus abelii</name>
    <dbReference type="NCBI Taxonomy" id="9601"/>
    <lineage>
        <taxon>Eukaryota</taxon>
        <taxon>Metazoa</taxon>
        <taxon>Chordata</taxon>
        <taxon>Craniata</taxon>
        <taxon>Vertebrata</taxon>
        <taxon>Euteleostomi</taxon>
        <taxon>Mammalia</taxon>
        <taxon>Eutheria</taxon>
        <taxon>Euarchontoglires</taxon>
        <taxon>Primates</taxon>
        <taxon>Haplorrhini</taxon>
        <taxon>Catarrhini</taxon>
        <taxon>Hominidae</taxon>
        <taxon>Pongo</taxon>
    </lineage>
</organism>
<protein>
    <recommendedName>
        <fullName>1-acyl-sn-glycerol-3-phosphate acyltransferase delta</fullName>
        <ecNumber evidence="1">2.3.1.51</ecNumber>
    </recommendedName>
    <alternativeName>
        <fullName>1-acylglycerol-3-phosphate O-acyltransferase 4</fullName>
        <shortName>1-AGP acyltransferase 4</shortName>
        <shortName>1-AGPAT 4</shortName>
    </alternativeName>
    <alternativeName>
        <fullName>Lysophosphatidic acid acyltransferase delta</fullName>
        <shortName>LPAAT-delta</shortName>
    </alternativeName>
</protein>
<comment type="function">
    <text evidence="1">Converts 1-acyl-sn-glycerol-3-phosphate (lysophosphatidic acid or LPA) into 1,2-diacyl-sn-glycerol-3-phosphate (phosphatidic acid or PA) by incorporating an acyl moiety at the sn-2 position of the glycerol backbone (By similarity). Exhibits high acyl-CoA specificity for polyunsaturated fatty acyl-CoA, especially docosahexaenoyl-CoA (22:6-CoA, DHA-CoA) (By similarity).</text>
</comment>
<comment type="catalytic activity">
    <reaction evidence="1">
        <text>a 1-acyl-sn-glycero-3-phosphate + an acyl-CoA = a 1,2-diacyl-sn-glycero-3-phosphate + CoA</text>
        <dbReference type="Rhea" id="RHEA:19709"/>
        <dbReference type="ChEBI" id="CHEBI:57287"/>
        <dbReference type="ChEBI" id="CHEBI:57970"/>
        <dbReference type="ChEBI" id="CHEBI:58342"/>
        <dbReference type="ChEBI" id="CHEBI:58608"/>
        <dbReference type="EC" id="2.3.1.51"/>
    </reaction>
    <physiologicalReaction direction="left-to-right" evidence="1">
        <dbReference type="Rhea" id="RHEA:19710"/>
    </physiologicalReaction>
</comment>
<comment type="catalytic activity">
    <reaction evidence="1">
        <text>(4Z,7Z,10Z,13Z,16Z,19Z)-docosahexaenoyl-CoA + 1-hexadecanoyl-sn-glycero-3-phosphate = 1-hexadecanoyl-2-(4Z,7Z,10Z,13Z,16Z,19Z-docosahexaenoyl)-sn-glycero-3-phosphate + CoA</text>
        <dbReference type="Rhea" id="RHEA:55300"/>
        <dbReference type="ChEBI" id="CHEBI:57287"/>
        <dbReference type="ChEBI" id="CHEBI:57518"/>
        <dbReference type="ChEBI" id="CHEBI:74298"/>
        <dbReference type="ChEBI" id="CHEBI:82928"/>
    </reaction>
    <physiologicalReaction direction="left-to-right" evidence="1">
        <dbReference type="Rhea" id="RHEA:55301"/>
    </physiologicalReaction>
</comment>
<comment type="catalytic activity">
    <reaction evidence="1">
        <text>1-octadecanoyl-sn-glycero-3-phosphate + (9Z,12Z)-octadecadienoyl-CoA = 1-octadecanoyl-2-(9Z,12Z-octadecadienoyl)-sn-glycero-3-phosphate + CoA</text>
        <dbReference type="Rhea" id="RHEA:55304"/>
        <dbReference type="ChEBI" id="CHEBI:57287"/>
        <dbReference type="ChEBI" id="CHEBI:57383"/>
        <dbReference type="ChEBI" id="CHEBI:74565"/>
        <dbReference type="ChEBI" id="CHEBI:77098"/>
    </reaction>
    <physiologicalReaction direction="left-to-right" evidence="1">
        <dbReference type="Rhea" id="RHEA:55305"/>
    </physiologicalReaction>
</comment>
<comment type="catalytic activity">
    <reaction evidence="1">
        <text>1-octadecanoyl-sn-glycero-3-phosphate + (4Z,7Z,10Z,13Z,16Z,19Z)-docosahexaenoyl-CoA = 1-octadecanoyl-2-(4Z,7Z,10Z,13Z,16Z,19Z-docosahexaenoyl)-sn-glycero-3-phosphate + CoA</text>
        <dbReference type="Rhea" id="RHEA:55308"/>
        <dbReference type="ChEBI" id="CHEBI:57287"/>
        <dbReference type="ChEBI" id="CHEBI:74298"/>
        <dbReference type="ChEBI" id="CHEBI:74565"/>
        <dbReference type="ChEBI" id="CHEBI:77130"/>
    </reaction>
    <physiologicalReaction direction="left-to-right" evidence="1">
        <dbReference type="Rhea" id="RHEA:55309"/>
    </physiologicalReaction>
</comment>
<comment type="catalytic activity">
    <reaction evidence="1">
        <text>(4Z,7Z,10Z,13Z,16Z,19Z)-docosahexaenoyl-CoA + 1-(9Z-octadecenoyl)-sn-glycero-3-phosphate = 1-(9Z-octadecenoyl)-2-(4Z,7Z,10Z,13Z,16Z,19Z-docosahexaenoyl)-sn-glycero-3-phosphate + CoA</text>
        <dbReference type="Rhea" id="RHEA:55312"/>
        <dbReference type="ChEBI" id="CHEBI:57287"/>
        <dbReference type="ChEBI" id="CHEBI:74298"/>
        <dbReference type="ChEBI" id="CHEBI:74544"/>
        <dbReference type="ChEBI" id="CHEBI:138723"/>
    </reaction>
    <physiologicalReaction direction="left-to-right" evidence="1">
        <dbReference type="Rhea" id="RHEA:55313"/>
    </physiologicalReaction>
</comment>
<comment type="pathway">
    <text>Phospholipid metabolism; CDP-diacylglycerol biosynthesis; CDP-diacylglycerol from sn-glycerol 3-phosphate: step 2/3.</text>
</comment>
<comment type="subcellular location">
    <subcellularLocation>
        <location evidence="1">Endoplasmic reticulum membrane</location>
        <topology evidence="3">Multi-pass membrane protein</topology>
    </subcellularLocation>
</comment>
<comment type="domain">
    <text evidence="2">The HXXXXD motif is essential for acyltransferase activity and may constitute the binding site for the phosphate moiety of the glycerol-3-phosphate.</text>
</comment>
<comment type="similarity">
    <text evidence="4">Belongs to the 1-acyl-sn-glycerol-3-phosphate acyltransferase family.</text>
</comment>
<evidence type="ECO:0000250" key="1">
    <source>
        <dbReference type="UniProtKB" id="Q8K4X7"/>
    </source>
</evidence>
<evidence type="ECO:0000250" key="2">
    <source>
        <dbReference type="UniProtKB" id="Q9D517"/>
    </source>
</evidence>
<evidence type="ECO:0000255" key="3"/>
<evidence type="ECO:0000305" key="4"/>
<feature type="chain" id="PRO_0000293478" description="1-acyl-sn-glycerol-3-phosphate acyltransferase delta">
    <location>
        <begin position="1"/>
        <end position="378"/>
    </location>
</feature>
<feature type="transmembrane region" description="Helical" evidence="3">
    <location>
        <begin position="11"/>
        <end position="31"/>
    </location>
</feature>
<feature type="transmembrane region" description="Helical" evidence="3">
    <location>
        <begin position="125"/>
        <end position="145"/>
    </location>
</feature>
<feature type="transmembrane region" description="Helical" evidence="3">
    <location>
        <begin position="307"/>
        <end position="327"/>
    </location>
</feature>
<feature type="transmembrane region" description="Helical" evidence="3">
    <location>
        <begin position="338"/>
        <end position="358"/>
    </location>
</feature>
<feature type="short sequence motif" description="HXXXXD motif" evidence="2">
    <location>
        <begin position="96"/>
        <end position="101"/>
    </location>
</feature>
<dbReference type="EC" id="2.3.1.51" evidence="1"/>
<dbReference type="EMBL" id="CR860261">
    <property type="protein sequence ID" value="CAH92403.1"/>
    <property type="molecule type" value="mRNA"/>
</dbReference>
<dbReference type="RefSeq" id="NP_001126417.1">
    <property type="nucleotide sequence ID" value="NM_001132945.1"/>
</dbReference>
<dbReference type="FunCoup" id="Q5R757">
    <property type="interactions" value="1240"/>
</dbReference>
<dbReference type="STRING" id="9601.ENSPPYP00000019214"/>
<dbReference type="GeneID" id="100173400"/>
<dbReference type="KEGG" id="pon:100173400"/>
<dbReference type="CTD" id="56895"/>
<dbReference type="eggNOG" id="KOG1505">
    <property type="taxonomic scope" value="Eukaryota"/>
</dbReference>
<dbReference type="InParanoid" id="Q5R757"/>
<dbReference type="OrthoDB" id="189226at2759"/>
<dbReference type="UniPathway" id="UPA00557">
    <property type="reaction ID" value="UER00613"/>
</dbReference>
<dbReference type="Proteomes" id="UP000001595">
    <property type="component" value="Unplaced"/>
</dbReference>
<dbReference type="GO" id="GO:0005783">
    <property type="term" value="C:endoplasmic reticulum"/>
    <property type="evidence" value="ECO:0000250"/>
    <property type="project" value="UniProtKB"/>
</dbReference>
<dbReference type="GO" id="GO:0005789">
    <property type="term" value="C:endoplasmic reticulum membrane"/>
    <property type="evidence" value="ECO:0007669"/>
    <property type="project" value="UniProtKB-SubCell"/>
</dbReference>
<dbReference type="GO" id="GO:0005741">
    <property type="term" value="C:mitochondrial outer membrane"/>
    <property type="evidence" value="ECO:0007669"/>
    <property type="project" value="TreeGrafter"/>
</dbReference>
<dbReference type="GO" id="GO:0003841">
    <property type="term" value="F:1-acylglycerol-3-phosphate O-acyltransferase activity"/>
    <property type="evidence" value="ECO:0000250"/>
    <property type="project" value="UniProtKB"/>
</dbReference>
<dbReference type="GO" id="GO:0016024">
    <property type="term" value="P:CDP-diacylglycerol biosynthetic process"/>
    <property type="evidence" value="ECO:0007669"/>
    <property type="project" value="UniProtKB-UniPathway"/>
</dbReference>
<dbReference type="CDD" id="cd07990">
    <property type="entry name" value="LPLAT_LCLAT1-like"/>
    <property type="match status" value="1"/>
</dbReference>
<dbReference type="InterPro" id="IPR032098">
    <property type="entry name" value="Acyltransf_C"/>
</dbReference>
<dbReference type="InterPro" id="IPR002123">
    <property type="entry name" value="Plipid/glycerol_acylTrfase"/>
</dbReference>
<dbReference type="PANTHER" id="PTHR10983:SF8">
    <property type="entry name" value="1-ACYL-SN-GLYCEROL-3-PHOSPHATE ACYLTRANSFERASE DELTA"/>
    <property type="match status" value="1"/>
</dbReference>
<dbReference type="PANTHER" id="PTHR10983">
    <property type="entry name" value="1-ACYLGLYCEROL-3-PHOSPHATE ACYLTRANSFERASE-RELATED"/>
    <property type="match status" value="1"/>
</dbReference>
<dbReference type="Pfam" id="PF16076">
    <property type="entry name" value="Acyltransf_C"/>
    <property type="match status" value="1"/>
</dbReference>
<dbReference type="Pfam" id="PF01553">
    <property type="entry name" value="Acyltransferase"/>
    <property type="match status" value="1"/>
</dbReference>
<dbReference type="SMART" id="SM00563">
    <property type="entry name" value="PlsC"/>
    <property type="match status" value="1"/>
</dbReference>
<dbReference type="SUPFAM" id="SSF69593">
    <property type="entry name" value="Glycerol-3-phosphate (1)-acyltransferase"/>
    <property type="match status" value="1"/>
</dbReference>
<proteinExistence type="evidence at transcript level"/>
<reference key="1">
    <citation type="submission" date="2004-11" db="EMBL/GenBank/DDBJ databases">
        <authorList>
            <consortium name="The German cDNA consortium"/>
        </authorList>
    </citation>
    <scope>NUCLEOTIDE SEQUENCE [LARGE SCALE MRNA]</scope>
    <source>
        <tissue>Heart</tissue>
    </source>
</reference>
<gene>
    <name type="primary">AGPAT4</name>
</gene>
<keyword id="KW-0012">Acyltransferase</keyword>
<keyword id="KW-0256">Endoplasmic reticulum</keyword>
<keyword id="KW-0444">Lipid biosynthesis</keyword>
<keyword id="KW-0443">Lipid metabolism</keyword>
<keyword id="KW-0472">Membrane</keyword>
<keyword id="KW-0594">Phospholipid biosynthesis</keyword>
<keyword id="KW-1208">Phospholipid metabolism</keyword>
<keyword id="KW-1185">Reference proteome</keyword>
<keyword id="KW-0808">Transferase</keyword>
<keyword id="KW-0812">Transmembrane</keyword>
<keyword id="KW-1133">Transmembrane helix</keyword>